<evidence type="ECO:0000255" key="1">
    <source>
        <dbReference type="HAMAP-Rule" id="MF_00431"/>
    </source>
</evidence>
<dbReference type="EMBL" id="AB237912">
    <property type="protein sequence ID" value="BAE46662.1"/>
    <property type="molecule type" value="Genomic_DNA"/>
</dbReference>
<dbReference type="RefSeq" id="YP_358687.1">
    <property type="nucleotide sequence ID" value="NC_007500.1"/>
</dbReference>
<dbReference type="SMR" id="Q3C1J1"/>
<dbReference type="GeneID" id="3735099"/>
<dbReference type="KEGG" id="nsy:3735099"/>
<dbReference type="OrthoDB" id="21392at4085"/>
<dbReference type="Proteomes" id="UP000189701">
    <property type="component" value="Chloroplast Pltd"/>
</dbReference>
<dbReference type="GO" id="GO:0009535">
    <property type="term" value="C:chloroplast thylakoid membrane"/>
    <property type="evidence" value="ECO:0007669"/>
    <property type="project" value="UniProtKB-SubCell"/>
</dbReference>
<dbReference type="GO" id="GO:0009522">
    <property type="term" value="C:photosystem I"/>
    <property type="evidence" value="ECO:0007669"/>
    <property type="project" value="UniProtKB-KW"/>
</dbReference>
<dbReference type="GO" id="GO:0015979">
    <property type="term" value="P:photosynthesis"/>
    <property type="evidence" value="ECO:0007669"/>
    <property type="project" value="UniProtKB-UniRule"/>
</dbReference>
<dbReference type="HAMAP" id="MF_00431">
    <property type="entry name" value="PSI_PsaI"/>
    <property type="match status" value="1"/>
</dbReference>
<dbReference type="InterPro" id="IPR001302">
    <property type="entry name" value="PSI_PsaI"/>
</dbReference>
<dbReference type="InterPro" id="IPR036357">
    <property type="entry name" value="PSI_PsaI_sf"/>
</dbReference>
<dbReference type="NCBIfam" id="TIGR03052">
    <property type="entry name" value="PS_I_psaI"/>
    <property type="match status" value="1"/>
</dbReference>
<dbReference type="PANTHER" id="PTHR35775">
    <property type="match status" value="1"/>
</dbReference>
<dbReference type="PANTHER" id="PTHR35775:SF2">
    <property type="entry name" value="PHOTOSYSTEM I REACTION CENTER SUBUNIT VIII"/>
    <property type="match status" value="1"/>
</dbReference>
<dbReference type="Pfam" id="PF00796">
    <property type="entry name" value="PSI_8"/>
    <property type="match status" value="1"/>
</dbReference>
<dbReference type="SUPFAM" id="SSF81540">
    <property type="entry name" value="Subunit VIII of photosystem I reaction centre, PsaI"/>
    <property type="match status" value="1"/>
</dbReference>
<accession>Q3C1J1</accession>
<keyword id="KW-0150">Chloroplast</keyword>
<keyword id="KW-0472">Membrane</keyword>
<keyword id="KW-0602">Photosynthesis</keyword>
<keyword id="KW-0603">Photosystem I</keyword>
<keyword id="KW-0934">Plastid</keyword>
<keyword id="KW-1185">Reference proteome</keyword>
<keyword id="KW-0793">Thylakoid</keyword>
<keyword id="KW-0812">Transmembrane</keyword>
<keyword id="KW-1133">Transmembrane helix</keyword>
<comment type="function">
    <text evidence="1">May help in the organization of the PsaL subunit.</text>
</comment>
<comment type="subcellular location">
    <subcellularLocation>
        <location evidence="1">Plastid</location>
        <location evidence="1">Chloroplast thylakoid membrane</location>
        <topology evidence="1">Single-pass membrane protein</topology>
    </subcellularLocation>
</comment>
<comment type="similarity">
    <text evidence="1">Belongs to the PsaI family.</text>
</comment>
<feature type="chain" id="PRO_0000276028" description="Photosystem I reaction center subunit VIII">
    <location>
        <begin position="1"/>
        <end position="36"/>
    </location>
</feature>
<feature type="transmembrane region" description="Helical" evidence="1">
    <location>
        <begin position="8"/>
        <end position="28"/>
    </location>
</feature>
<geneLocation type="chloroplast"/>
<gene>
    <name evidence="1" type="primary">psaI</name>
</gene>
<sequence>MTNLNLPSIFVPLVGLVFPAIAMASLFLHVQKNKIV</sequence>
<organism>
    <name type="scientific">Nicotiana sylvestris</name>
    <name type="common">Wood tobacco</name>
    <name type="synonym">South American tobacco</name>
    <dbReference type="NCBI Taxonomy" id="4096"/>
    <lineage>
        <taxon>Eukaryota</taxon>
        <taxon>Viridiplantae</taxon>
        <taxon>Streptophyta</taxon>
        <taxon>Embryophyta</taxon>
        <taxon>Tracheophyta</taxon>
        <taxon>Spermatophyta</taxon>
        <taxon>Magnoliopsida</taxon>
        <taxon>eudicotyledons</taxon>
        <taxon>Gunneridae</taxon>
        <taxon>Pentapetalae</taxon>
        <taxon>asterids</taxon>
        <taxon>lamiids</taxon>
        <taxon>Solanales</taxon>
        <taxon>Solanaceae</taxon>
        <taxon>Nicotianoideae</taxon>
        <taxon>Nicotianeae</taxon>
        <taxon>Nicotiana</taxon>
    </lineage>
</organism>
<reference key="1">
    <citation type="journal article" date="2006" name="Mol. Genet. Genomics">
        <title>The chloroplast genome of Nicotiana sylvestris and Nicotiana tomentosiformis: complete sequencing confirms that the Nicotiana sylvestris progenitor is the maternal genome donor of Nicotiana tabacum.</title>
        <authorList>
            <person name="Yukawa M."/>
            <person name="Tsudzuki T."/>
            <person name="Sugiura M."/>
        </authorList>
    </citation>
    <scope>NUCLEOTIDE SEQUENCE [LARGE SCALE GENOMIC DNA]</scope>
</reference>
<proteinExistence type="inferred from homology"/>
<protein>
    <recommendedName>
        <fullName evidence="1">Photosystem I reaction center subunit VIII</fullName>
        <shortName evidence="1">PSI-I</shortName>
    </recommendedName>
</protein>
<name>PSAI_NICSY</name>